<comment type="function">
    <text evidence="2">Essential component of the TIM23 complex, a complex that mediates the translocation of transit peptide-containing proteins across the mitochondrial inner membrane.</text>
</comment>
<comment type="subunit">
    <text evidence="2">Component of the TIM23 complex at least composed of TIMM23, TIMM17 (TIMM17A or TIMM17B) and TIMM50. The complex interacts with the TIMM44 component of the PAM complex and with DNAJC15.</text>
</comment>
<comment type="subcellular location">
    <subcellularLocation>
        <location evidence="2">Mitochondrion inner membrane</location>
        <topology evidence="3">Multi-pass membrane protein</topology>
    </subcellularLocation>
</comment>
<comment type="PTM">
    <text evidence="2">Degraded by YMEL1 downstream of the integrated stress response (ISR).</text>
</comment>
<comment type="similarity">
    <text evidence="5">Belongs to the Tim17/Tim22/Tim23 family.</text>
</comment>
<gene>
    <name type="primary">Timm17a</name>
    <name type="synonym">Mimt17</name>
    <name type="synonym">Tim17</name>
    <name type="synonym">Tim17a</name>
    <name type="synonym">Timm17</name>
</gene>
<feature type="chain" id="PRO_0000210286" description="Mitochondrial import inner membrane translocase subunit Tim17-A">
    <location>
        <begin position="1"/>
        <end position="171"/>
    </location>
</feature>
<feature type="transmembrane region" description="Helical" evidence="3">
    <location>
        <begin position="17"/>
        <end position="37"/>
    </location>
</feature>
<feature type="transmembrane region" description="Helical" evidence="3">
    <location>
        <begin position="63"/>
        <end position="77"/>
    </location>
</feature>
<feature type="transmembrane region" description="Helical" evidence="3">
    <location>
        <begin position="113"/>
        <end position="133"/>
    </location>
</feature>
<feature type="region of interest" description="Disordered" evidence="4">
    <location>
        <begin position="147"/>
        <end position="171"/>
    </location>
</feature>
<feature type="compositionally biased region" description="Low complexity" evidence="4">
    <location>
        <begin position="153"/>
        <end position="163"/>
    </location>
</feature>
<feature type="disulfide bond" evidence="1">
    <location>
        <begin position="9"/>
        <end position="78"/>
    </location>
</feature>
<name>TI17A_RAT</name>
<evidence type="ECO:0000250" key="1">
    <source>
        <dbReference type="UniProtKB" id="P39515"/>
    </source>
</evidence>
<evidence type="ECO:0000250" key="2">
    <source>
        <dbReference type="UniProtKB" id="Q99595"/>
    </source>
</evidence>
<evidence type="ECO:0000255" key="3"/>
<evidence type="ECO:0000256" key="4">
    <source>
        <dbReference type="SAM" id="MobiDB-lite"/>
    </source>
</evidence>
<evidence type="ECO:0000305" key="5"/>
<protein>
    <recommendedName>
        <fullName>Mitochondrial import inner membrane translocase subunit Tim17-A</fullName>
    </recommendedName>
    <alternativeName>
        <fullName>Inner membrane preprotein translocase Tim17a</fullName>
    </alternativeName>
</protein>
<keyword id="KW-1015">Disulfide bond</keyword>
<keyword id="KW-0472">Membrane</keyword>
<keyword id="KW-0496">Mitochondrion</keyword>
<keyword id="KW-0999">Mitochondrion inner membrane</keyword>
<keyword id="KW-0653">Protein transport</keyword>
<keyword id="KW-1185">Reference proteome</keyword>
<keyword id="KW-0811">Translocation</keyword>
<keyword id="KW-0812">Transmembrane</keyword>
<keyword id="KW-1133">Transmembrane helix</keyword>
<keyword id="KW-0813">Transport</keyword>
<dbReference type="EMBL" id="AB006450">
    <property type="protein sequence ID" value="BAA21818.1"/>
    <property type="molecule type" value="mRNA"/>
</dbReference>
<dbReference type="PIR" id="JE0153">
    <property type="entry name" value="JE0153"/>
</dbReference>
<dbReference type="RefSeq" id="NP_062224.1">
    <property type="nucleotide sequence ID" value="NM_019351.2"/>
</dbReference>
<dbReference type="RefSeq" id="XP_063128632.1">
    <property type="nucleotide sequence ID" value="XM_063272562.1"/>
</dbReference>
<dbReference type="SMR" id="O35092"/>
<dbReference type="CORUM" id="O35092"/>
<dbReference type="FunCoup" id="O35092">
    <property type="interactions" value="1813"/>
</dbReference>
<dbReference type="STRING" id="10116.ENSRNOP00000009398"/>
<dbReference type="PhosphoSitePlus" id="O35092"/>
<dbReference type="jPOST" id="O35092"/>
<dbReference type="PaxDb" id="10116-ENSRNOP00000009398"/>
<dbReference type="GeneID" id="54311"/>
<dbReference type="KEGG" id="rno:54311"/>
<dbReference type="UCSC" id="RGD:3862">
    <property type="organism name" value="rat"/>
</dbReference>
<dbReference type="AGR" id="RGD:3862"/>
<dbReference type="CTD" id="10440"/>
<dbReference type="RGD" id="3862">
    <property type="gene designation" value="Timm17a"/>
</dbReference>
<dbReference type="VEuPathDB" id="HostDB:ENSRNOG00000007040"/>
<dbReference type="eggNOG" id="KOG1652">
    <property type="taxonomic scope" value="Eukaryota"/>
</dbReference>
<dbReference type="HOGENOM" id="CLU_087811_1_1_1"/>
<dbReference type="InParanoid" id="O35092"/>
<dbReference type="OrthoDB" id="80251at9989"/>
<dbReference type="PhylomeDB" id="O35092"/>
<dbReference type="TreeFam" id="TF106195"/>
<dbReference type="PRO" id="PR:O35092"/>
<dbReference type="Proteomes" id="UP000002494">
    <property type="component" value="Chromosome 13"/>
</dbReference>
<dbReference type="Bgee" id="ENSRNOG00000007040">
    <property type="expression patterns" value="Expressed in heart and 20 other cell types or tissues"/>
</dbReference>
<dbReference type="GO" id="GO:0005743">
    <property type="term" value="C:mitochondrial inner membrane"/>
    <property type="evidence" value="ECO:0000314"/>
    <property type="project" value="RGD"/>
</dbReference>
<dbReference type="GO" id="GO:0005744">
    <property type="term" value="C:TIM23 mitochondrial import inner membrane translocase complex"/>
    <property type="evidence" value="ECO:0000266"/>
    <property type="project" value="RGD"/>
</dbReference>
<dbReference type="GO" id="GO:0008320">
    <property type="term" value="F:protein transmembrane transporter activity"/>
    <property type="evidence" value="ECO:0007669"/>
    <property type="project" value="InterPro"/>
</dbReference>
<dbReference type="GO" id="GO:0010954">
    <property type="term" value="P:positive regulation of protein processing"/>
    <property type="evidence" value="ECO:0000315"/>
    <property type="project" value="RGD"/>
</dbReference>
<dbReference type="GO" id="GO:0030150">
    <property type="term" value="P:protein import into mitochondrial matrix"/>
    <property type="evidence" value="ECO:0000318"/>
    <property type="project" value="GO_Central"/>
</dbReference>
<dbReference type="InterPro" id="IPR005678">
    <property type="entry name" value="Tim17"/>
</dbReference>
<dbReference type="NCBIfam" id="TIGR00980">
    <property type="entry name" value="3a0801so1tim17"/>
    <property type="match status" value="1"/>
</dbReference>
<dbReference type="PANTHER" id="PTHR10485">
    <property type="entry name" value="MITOCHONDRIAL IMPORT INNER MEMBRANE TRANSLOCASE SUBUNIT TIM-17"/>
    <property type="match status" value="1"/>
</dbReference>
<dbReference type="PANTHER" id="PTHR10485:SF1">
    <property type="entry name" value="MITOCHONDRIAL IMPORT INNER MEMBRANE TRANSLOCASE SUBUNIT TIM17-A"/>
    <property type="match status" value="1"/>
</dbReference>
<dbReference type="Pfam" id="PF02466">
    <property type="entry name" value="Tim17"/>
    <property type="match status" value="1"/>
</dbReference>
<reference key="1">
    <citation type="journal article" date="1998" name="J. Biochem.">
        <title>Identification of the protein import components of the rat mitochondrial inner membrane, rTIM17, rTIM23, and rTIM44.</title>
        <authorList>
            <person name="Ishihara N."/>
            <person name="Mihara K."/>
        </authorList>
    </citation>
    <scope>NUCLEOTIDE SEQUENCE [MRNA]</scope>
    <source>
        <tissue>Liver</tissue>
    </source>
</reference>
<accession>O35092</accession>
<sequence length="171" mass="18038">MEEYAREPCPWRIVDDCGGAFTMGTIGGGIFQAFKGFRNSPVGVNHRLRGSLTAIKTRAPQLGGSFAVWGGLFSTIDCGMVQIRGKEDPWNSITSGALTGAILAARNGPVAMVGSAAMGGILLALIEGAGILLTRFASAQFPNGPQFAEDHSQLPSSQLPSSPFGDYRQYQ</sequence>
<organism>
    <name type="scientific">Rattus norvegicus</name>
    <name type="common">Rat</name>
    <dbReference type="NCBI Taxonomy" id="10116"/>
    <lineage>
        <taxon>Eukaryota</taxon>
        <taxon>Metazoa</taxon>
        <taxon>Chordata</taxon>
        <taxon>Craniata</taxon>
        <taxon>Vertebrata</taxon>
        <taxon>Euteleostomi</taxon>
        <taxon>Mammalia</taxon>
        <taxon>Eutheria</taxon>
        <taxon>Euarchontoglires</taxon>
        <taxon>Glires</taxon>
        <taxon>Rodentia</taxon>
        <taxon>Myomorpha</taxon>
        <taxon>Muroidea</taxon>
        <taxon>Muridae</taxon>
        <taxon>Murinae</taxon>
        <taxon>Rattus</taxon>
    </lineage>
</organism>
<proteinExistence type="evidence at transcript level"/>